<gene>
    <name type="primary">ksi</name>
</gene>
<accession>P00947</accession>
<comment type="catalytic activity">
    <reaction>
        <text>a 3-oxo-Delta(5)-steroid = a 3-oxo-Delta(4)-steroid</text>
        <dbReference type="Rhea" id="RHEA:14709"/>
        <dbReference type="ChEBI" id="CHEBI:47907"/>
        <dbReference type="ChEBI" id="CHEBI:47909"/>
        <dbReference type="EC" id="5.3.3.1"/>
    </reaction>
</comment>
<comment type="subunit">
    <text evidence="1 2 5">Homodimer.</text>
</comment>
<comment type="induction">
    <text>By steroids.</text>
</comment>
<evidence type="ECO:0000269" key="1">
    <source>
    </source>
</evidence>
<evidence type="ECO:0000269" key="2">
    <source>
    </source>
</evidence>
<evidence type="ECO:0000269" key="3">
    <source>
    </source>
</evidence>
<evidence type="ECO:0000269" key="4">
    <source>
    </source>
</evidence>
<evidence type="ECO:0000269" key="5">
    <source>
    </source>
</evidence>
<evidence type="ECO:0007829" key="6">
    <source>
        <dbReference type="PDB" id="1ISK"/>
    </source>
</evidence>
<evidence type="ECO:0007829" key="7">
    <source>
        <dbReference type="PDB" id="1OHP"/>
    </source>
</evidence>
<name>SDIS_COMTE</name>
<organism>
    <name type="scientific">Comamonas testosteroni</name>
    <name type="common">Pseudomonas testosteroni</name>
    <dbReference type="NCBI Taxonomy" id="285"/>
    <lineage>
        <taxon>Bacteria</taxon>
        <taxon>Pseudomonadati</taxon>
        <taxon>Pseudomonadota</taxon>
        <taxon>Betaproteobacteria</taxon>
        <taxon>Burkholderiales</taxon>
        <taxon>Comamonadaceae</taxon>
        <taxon>Comamonas</taxon>
    </lineage>
</organism>
<proteinExistence type="evidence at protein level"/>
<dbReference type="EC" id="5.3.3.1"/>
<dbReference type="EMBL" id="M22749">
    <property type="protein sequence ID" value="AAA25872.1"/>
    <property type="molecule type" value="Genomic_DNA"/>
</dbReference>
<dbReference type="EMBL" id="J03568">
    <property type="protein sequence ID" value="AAA25871.1"/>
    <property type="molecule type" value="Genomic_DNA"/>
</dbReference>
<dbReference type="PIR" id="JT0336">
    <property type="entry name" value="SIPSDT"/>
</dbReference>
<dbReference type="RefSeq" id="WP_003078309.1">
    <property type="nucleotide sequence ID" value="NZ_UFXL01000001.1"/>
</dbReference>
<dbReference type="PDB" id="1BUQ">
    <property type="method" value="NMR"/>
    <property type="chains" value="A/B=1-125"/>
</dbReference>
<dbReference type="PDB" id="1ISK">
    <property type="method" value="NMR"/>
    <property type="chains" value="A/B=1-125"/>
</dbReference>
<dbReference type="PDB" id="1OCV">
    <property type="method" value="X-ray"/>
    <property type="resolution" value="2.00 A"/>
    <property type="chains" value="A/B/C/D=1-125"/>
</dbReference>
<dbReference type="PDB" id="1OGZ">
    <property type="method" value="X-ray"/>
    <property type="resolution" value="2.30 A"/>
    <property type="chains" value="A=1-125"/>
</dbReference>
<dbReference type="PDB" id="1OHP">
    <property type="method" value="X-ray"/>
    <property type="resolution" value="1.53 A"/>
    <property type="chains" value="A/B/C/D=1-125"/>
</dbReference>
<dbReference type="PDB" id="1OHS">
    <property type="method" value="X-ray"/>
    <property type="resolution" value="1.70 A"/>
    <property type="chains" value="A/B/C/D=1-125"/>
</dbReference>
<dbReference type="PDB" id="1QJG">
    <property type="method" value="X-ray"/>
    <property type="resolution" value="2.30 A"/>
    <property type="chains" value="A/B/C/D/E/F=1-125"/>
</dbReference>
<dbReference type="PDB" id="3M8C">
    <property type="method" value="X-ray"/>
    <property type="resolution" value="2.10 A"/>
    <property type="chains" value="A/B/C/D=1-125"/>
</dbReference>
<dbReference type="PDB" id="3MHE">
    <property type="method" value="X-ray"/>
    <property type="resolution" value="1.72 A"/>
    <property type="chains" value="A/B=1-125"/>
</dbReference>
<dbReference type="PDB" id="3MKI">
    <property type="method" value="X-ray"/>
    <property type="resolution" value="2.00 A"/>
    <property type="chains" value="A/B/C/D=1-125"/>
</dbReference>
<dbReference type="PDB" id="3MYT">
    <property type="method" value="X-ray"/>
    <property type="resolution" value="1.96 A"/>
    <property type="chains" value="A/B/C/D=1-125"/>
</dbReference>
<dbReference type="PDB" id="3NBR">
    <property type="method" value="X-ray"/>
    <property type="resolution" value="1.73 A"/>
    <property type="chains" value="A=1-125"/>
</dbReference>
<dbReference type="PDB" id="3NHX">
    <property type="method" value="X-ray"/>
    <property type="resolution" value="1.59 A"/>
    <property type="chains" value="A=1-125"/>
</dbReference>
<dbReference type="PDB" id="3NM2">
    <property type="method" value="X-ray"/>
    <property type="resolution" value="1.89 A"/>
    <property type="chains" value="A=1-125"/>
</dbReference>
<dbReference type="PDB" id="3NUV">
    <property type="method" value="X-ray"/>
    <property type="resolution" value="1.76 A"/>
    <property type="chains" value="A/B=1-125"/>
</dbReference>
<dbReference type="PDB" id="3NXJ">
    <property type="method" value="X-ray"/>
    <property type="resolution" value="1.97 A"/>
    <property type="chains" value="A/B=1-125"/>
</dbReference>
<dbReference type="PDB" id="3OV4">
    <property type="method" value="X-ray"/>
    <property type="resolution" value="1.83 A"/>
    <property type="chains" value="A/B/C/D=1-125"/>
</dbReference>
<dbReference type="PDB" id="3T8U">
    <property type="method" value="X-ray"/>
    <property type="resolution" value="2.50 A"/>
    <property type="chains" value="A/B/C/D=1-125"/>
</dbReference>
<dbReference type="PDB" id="3UNL">
    <property type="method" value="X-ray"/>
    <property type="resolution" value="2.52 A"/>
    <property type="chains" value="A/B/C/D=1-125"/>
</dbReference>
<dbReference type="PDB" id="4L7K">
    <property type="method" value="X-ray"/>
    <property type="resolution" value="2.10 A"/>
    <property type="chains" value="A/B/C/D/E/F/G/H/I/J/K/O=1-125"/>
</dbReference>
<dbReference type="PDB" id="5DRE">
    <property type="method" value="X-ray"/>
    <property type="resolution" value="2.15 A"/>
    <property type="chains" value="A=1-125"/>
</dbReference>
<dbReference type="PDB" id="5UGI">
    <property type="method" value="X-ray"/>
    <property type="resolution" value="1.80 A"/>
    <property type="chains" value="A=1-125"/>
</dbReference>
<dbReference type="PDB" id="6UAD">
    <property type="method" value="X-ray"/>
    <property type="resolution" value="1.75 A"/>
    <property type="chains" value="A=1-125"/>
</dbReference>
<dbReference type="PDB" id="6UAE">
    <property type="method" value="X-ray"/>
    <property type="resolution" value="1.93 A"/>
    <property type="chains" value="A/B/C/D=1-125"/>
</dbReference>
<dbReference type="PDB" id="8CHO">
    <property type="method" value="X-ray"/>
    <property type="resolution" value="2.30 A"/>
    <property type="chains" value="A=1-125"/>
</dbReference>
<dbReference type="PDBsum" id="1BUQ"/>
<dbReference type="PDBsum" id="1ISK"/>
<dbReference type="PDBsum" id="1OCV"/>
<dbReference type="PDBsum" id="1OGZ"/>
<dbReference type="PDBsum" id="1OHP"/>
<dbReference type="PDBsum" id="1OHS"/>
<dbReference type="PDBsum" id="1QJG"/>
<dbReference type="PDBsum" id="3M8C"/>
<dbReference type="PDBsum" id="3MHE"/>
<dbReference type="PDBsum" id="3MKI"/>
<dbReference type="PDBsum" id="3MYT"/>
<dbReference type="PDBsum" id="3NBR"/>
<dbReference type="PDBsum" id="3NHX"/>
<dbReference type="PDBsum" id="3NM2"/>
<dbReference type="PDBsum" id="3NUV"/>
<dbReference type="PDBsum" id="3NXJ"/>
<dbReference type="PDBsum" id="3OV4"/>
<dbReference type="PDBsum" id="3T8U"/>
<dbReference type="PDBsum" id="3UNL"/>
<dbReference type="PDBsum" id="4L7K"/>
<dbReference type="PDBsum" id="5DRE"/>
<dbReference type="PDBsum" id="5UGI"/>
<dbReference type="PDBsum" id="6UAD"/>
<dbReference type="PDBsum" id="6UAE"/>
<dbReference type="PDBsum" id="8CHO"/>
<dbReference type="BMRB" id="P00947"/>
<dbReference type="SMR" id="P00947"/>
<dbReference type="DrugBank" id="DB01561">
    <property type="generic name" value="Androstanedione"/>
</dbReference>
<dbReference type="DrugBank" id="DB03515">
    <property type="generic name" value="Equilenin"/>
</dbReference>
<dbReference type="DrugBank" id="DB04693">
    <property type="generic name" value="Estrane-3,17-dione"/>
</dbReference>
<dbReference type="DrugBank" id="DB08308">
    <property type="generic name" value="SUCCINIC ACID MONO-(13-METHYL-3-OXO-2,3,6,7,8,9,10,11,12,13,14,15,16,17-TETRADECAHYDRO-1H-CYCLOPENTA[A]PHENANTHREN-17-YL) ESTER"/>
</dbReference>
<dbReference type="KEGG" id="ag:AAA25872"/>
<dbReference type="BRENDA" id="5.3.3.1">
    <property type="organism ID" value="1590"/>
</dbReference>
<dbReference type="SABIO-RK" id="P00947"/>
<dbReference type="EvolutionaryTrace" id="P00947"/>
<dbReference type="GO" id="GO:0004769">
    <property type="term" value="F:steroid Delta-isomerase activity"/>
    <property type="evidence" value="ECO:0007669"/>
    <property type="project" value="UniProtKB-EC"/>
</dbReference>
<dbReference type="GO" id="GO:0008202">
    <property type="term" value="P:steroid metabolic process"/>
    <property type="evidence" value="ECO:0007669"/>
    <property type="project" value="UniProtKB-KW"/>
</dbReference>
<dbReference type="CDD" id="cd00781">
    <property type="entry name" value="ketosteroid_isomerase"/>
    <property type="match status" value="1"/>
</dbReference>
<dbReference type="Gene3D" id="3.10.450.50">
    <property type="match status" value="1"/>
</dbReference>
<dbReference type="InterPro" id="IPR039256">
    <property type="entry name" value="Ketosteroid_isomerase"/>
</dbReference>
<dbReference type="InterPro" id="IPR032710">
    <property type="entry name" value="NTF2-like_dom_sf"/>
</dbReference>
<dbReference type="InterPro" id="IPR037401">
    <property type="entry name" value="SnoaL-like"/>
</dbReference>
<dbReference type="InterPro" id="IPR011944">
    <property type="entry name" value="Steroid_delta5-4_isomerase"/>
</dbReference>
<dbReference type="NCBIfam" id="TIGR02246">
    <property type="entry name" value="SgcJ/EcaC family oxidoreductase"/>
    <property type="match status" value="1"/>
</dbReference>
<dbReference type="Pfam" id="PF12680">
    <property type="entry name" value="SnoaL_2"/>
    <property type="match status" value="1"/>
</dbReference>
<dbReference type="SUPFAM" id="SSF54427">
    <property type="entry name" value="NTF2-like"/>
    <property type="match status" value="1"/>
</dbReference>
<protein>
    <recommendedName>
        <fullName>Steroid Delta-isomerase</fullName>
        <ecNumber>5.3.3.1</ecNumber>
    </recommendedName>
    <alternativeName>
        <fullName>Delta(5)-3-ketosteroid isomerase</fullName>
    </alternativeName>
</protein>
<keyword id="KW-0002">3D-structure</keyword>
<keyword id="KW-0903">Direct protein sequencing</keyword>
<keyword id="KW-0413">Isomerase</keyword>
<keyword id="KW-0443">Lipid metabolism</keyword>
<keyword id="KW-0753">Steroid metabolism</keyword>
<reference key="1">
    <citation type="journal article" date="1988" name="Gene">
        <title>Nucleotide sequence of the gene for the delta 5-3-ketosteroid isomerase of Pseudomonas testosteroni.</title>
        <authorList>
            <person name="Choi K.Y."/>
            <person name="Benisek W.F."/>
        </authorList>
    </citation>
    <scope>NUCLEOTIDE SEQUENCE [GENOMIC DNA]</scope>
</reference>
<reference key="2">
    <citation type="journal article" date="1987" name="Proc. Natl. Acad. Sci. U.S.A.">
        <title>Isolation and sequencing of the gene encoding delta 5-3-ketosteroid isomerase of Pseudomonas testosteroni: overexpression of the protein.</title>
        <authorList>
            <person name="Kuliopulos A."/>
            <person name="Shortle D."/>
            <person name="Talalay P."/>
        </authorList>
    </citation>
    <scope>NUCLEOTIDE SEQUENCE [GENOMIC DNA]</scope>
</reference>
<reference key="3">
    <citation type="journal article" date="1971" name="J. Biol. Chem.">
        <title>The amino acid sequence of delta 5-3-ketosteroid isomerase of Pseudomonas testosteroni.</title>
        <authorList>
            <person name="Benson A.M."/>
            <person name="Jarabak R."/>
            <person name="Talalay P."/>
        </authorList>
    </citation>
    <scope>PRELIMINARY PROTEIN SEQUENCE</scope>
</reference>
<reference key="4">
    <citation type="journal article" date="1973" name="FEBS Lett.">
        <title>Molecular weight determination and structural studies of Pseudomonas testosteroni delta 5 leads to 4-3-oxosteroid isomerase (EC 5.3.3.1).</title>
        <authorList>
            <person name="Weintraub H."/>
            <person name="Vincent F."/>
            <person name="Baulieu E.-E."/>
            <person name="Alfsen A."/>
        </authorList>
    </citation>
    <scope>CHARACTERIZATION</scope>
</reference>
<reference key="5">
    <citation type="journal article" date="1997" name="Biochemistry">
        <title>High-resolution crystal structures of delta5-3-ketosteroid isomerase with and without a reaction intermediate analogue.</title>
        <authorList>
            <person name="Kim S.-W."/>
            <person name="Cha S.-S."/>
            <person name="Cho H.-S."/>
            <person name="Kim J.-S."/>
            <person name="Ha N.-C."/>
            <person name="Cho M.-J."/>
            <person name="Joo S."/>
            <person name="Kim K.-K."/>
            <person name="Choi K.-Y."/>
            <person name="Oh B.-H."/>
        </authorList>
    </citation>
    <scope>X-RAY CRYSTALLOGRAPHY (2.3 ANGSTROMS)</scope>
</reference>
<reference key="6">
    <citation type="journal article" date="1997" name="Science">
        <title>Solution structure of 3-oxo-delta5-steroid isomerase.</title>
        <authorList>
            <person name="Wu Z.R."/>
            <person name="Ebrahimian S."/>
            <person name="Zawrotny M.E."/>
            <person name="Thornburg L.D."/>
            <person name="Perez-Alvarado G.C."/>
            <person name="Brothers P."/>
            <person name="Pollack R.M."/>
            <person name="Summers M.F."/>
        </authorList>
    </citation>
    <scope>STRUCTURE BY NMR</scope>
    <scope>MUTAGENESIS OF ASP-99</scope>
</reference>
<reference key="7">
    <citation type="journal article" date="1998" name="Biochemistry">
        <title>Solution structure of delta 5-3-ketosteroid isomerase complexed with the steroid 19-nortestosterone hemisuccinate.</title>
        <authorList>
            <person name="Massiah M.A."/>
            <person name="Abeygunawardana C."/>
            <person name="Gittis A.G."/>
            <person name="Mildvan A.S."/>
        </authorList>
    </citation>
    <scope>STRUCTURE BY NMR IN COMPLEX WITH PRODUCT ANALOG</scope>
</reference>
<reference key="8">
    <citation type="journal article" date="1999" name="J. Biol. Chem.">
        <title>Crystal structure of delta(5)-3-ketosteroid isomerase from Pseudomonas testosteroni in complex with equilenin settles the correct hydrogen bonding scheme for transition state stabilization.</title>
        <authorList>
            <person name="Cho H.-S."/>
            <person name="Ha N.-C."/>
            <person name="Choi G."/>
            <person name="Kim H.-J."/>
            <person name="Lee D."/>
            <person name="Oh K.S."/>
            <person name="Kim K.S."/>
            <person name="Lee W."/>
            <person name="Choi K.Y."/>
            <person name="Oh B.-H."/>
        </authorList>
    </citation>
    <scope>X-RAY CRYSTALLOGRAPHY (2.3 ANGSTROMS) IN COMPLEX WITH REACTION INTERMEDIATE ANALOG</scope>
</reference>
<reference key="9">
    <citation type="journal article" date="2003" name="Biochem. J.">
        <title>The conserved cis-Pro39 residue plays a crucial role in the proper positioning of the catalytic base Asp38 in ketosteroid isomerase from Comamonas testosteroni.</title>
        <authorList>
            <person name="Nam G.H."/>
            <person name="Cha S.-S."/>
            <person name="Yun Y.S."/>
            <person name="Oh Y.H."/>
            <person name="Hong B.H."/>
            <person name="Lee H.-S."/>
            <person name="Choi K.-Y."/>
        </authorList>
    </citation>
    <scope>X-RAY CRYSTALLOGRAPHY (2.3 ANGSTROMS) OF MUTANT ALA-39 IN COMPLEX WITH REACTION INTERMEDIATE ANALOG</scope>
</reference>
<reference key="10">
    <citation type="journal article" date="2003" name="J. Biol. Chem.">
        <title>Origin of the different pH activity profile in two homologous ketosteroid isomerases.</title>
        <authorList>
            <person name="Yun Y.S."/>
            <person name="Lee T.-H."/>
            <person name="Nam G.H."/>
            <person name="Jang do S."/>
            <person name="Shin S."/>
            <person name="Oh B.-H."/>
            <person name="Choi K.-Y."/>
        </authorList>
    </citation>
    <scope>X-RAY CRYSTALLOGRAPHY (2.0 ANGSTROMS) OF MUTANT TRP-116</scope>
</reference>
<sequence length="125" mass="13398">MNTPEHMTAVVQRYVAALNAGDLDGIVALFADDATVEDPVGSEPRSGTAAIREFYANSLKLPLAVELTQEVRAVANEAAFAFTVSFEYQGRKTVVAPIDHFRFNGAGKVVSMRALFGEKNIHAGA</sequence>
<feature type="chain" id="PRO_0000097644" description="Steroid Delta-isomerase">
    <location>
        <begin position="1"/>
        <end position="125"/>
    </location>
</feature>
<feature type="active site" description="Proton donor">
    <location>
        <position position="14"/>
    </location>
</feature>
<feature type="active site" description="Proton acceptor" evidence="3">
    <location>
        <position position="38"/>
    </location>
</feature>
<feature type="binding site">
    <location>
        <position position="99"/>
    </location>
    <ligand>
        <name>substrate</name>
    </ligand>
</feature>
<feature type="mutagenesis site" description="Perturbs active site geometry and lowers activity.">
    <original>P</original>
    <variation>A</variation>
    <location>
        <position position="39"/>
    </location>
</feature>
<feature type="mutagenesis site" description="Lowers activity 3000-fold." evidence="4">
    <original>D</original>
    <variation>A</variation>
    <location>
        <position position="99"/>
    </location>
</feature>
<feature type="mutagenesis site" description="Slightly lower activity at neutral pH. Increased catalytic activity at pH 3.8.">
    <original>F</original>
    <variation>W</variation>
    <location>
        <position position="116"/>
    </location>
</feature>
<feature type="helix" evidence="7">
    <location>
        <begin position="4"/>
        <end position="20"/>
    </location>
</feature>
<feature type="helix" evidence="7">
    <location>
        <begin position="23"/>
        <end position="27"/>
    </location>
</feature>
<feature type="strand" evidence="7">
    <location>
        <begin position="30"/>
        <end position="39"/>
    </location>
</feature>
<feature type="strand" evidence="7">
    <location>
        <begin position="45"/>
        <end position="47"/>
    </location>
</feature>
<feature type="helix" evidence="7">
    <location>
        <begin position="48"/>
        <end position="58"/>
    </location>
</feature>
<feature type="strand" evidence="7">
    <location>
        <begin position="64"/>
        <end position="67"/>
    </location>
</feature>
<feature type="strand" evidence="7">
    <location>
        <begin position="72"/>
        <end position="74"/>
    </location>
</feature>
<feature type="strand" evidence="7">
    <location>
        <begin position="77"/>
        <end position="88"/>
    </location>
</feature>
<feature type="strand" evidence="7">
    <location>
        <begin position="91"/>
        <end position="95"/>
    </location>
</feature>
<feature type="strand" evidence="7">
    <location>
        <begin position="98"/>
        <end position="103"/>
    </location>
</feature>
<feature type="turn" evidence="6">
    <location>
        <begin position="105"/>
        <end position="107"/>
    </location>
</feature>
<feature type="strand" evidence="7">
    <location>
        <begin position="109"/>
        <end position="115"/>
    </location>
</feature>
<feature type="helix" evidence="7">
    <location>
        <begin position="118"/>
        <end position="120"/>
    </location>
</feature>
<feature type="strand" evidence="7">
    <location>
        <begin position="121"/>
        <end position="123"/>
    </location>
</feature>